<reference key="1">
    <citation type="journal article" date="2004" name="Mol. Cell. Biol.">
        <title>Identification of PCIF1, a POZ domain protein that inhibits PDX-1 (MODY4) transcriptional activity.</title>
        <authorList>
            <person name="Liu A."/>
            <person name="Desai B.M."/>
            <person name="Stoffers D.A."/>
        </authorList>
    </citation>
    <scope>NUCLEOTIDE SEQUENCE [MRNA]</scope>
    <scope>FUNCTION</scope>
    <scope>SUBCELLULAR LOCATION</scope>
    <scope>INTERACTION WITH PDX1/IPF1</scope>
    <source>
        <strain>BALB/cJ</strain>
        <tissue>Pancreas</tissue>
    </source>
</reference>
<reference key="2">
    <citation type="journal article" date="2005" name="Science">
        <title>The transcriptional landscape of the mammalian genome.</title>
        <authorList>
            <person name="Carninci P."/>
            <person name="Kasukawa T."/>
            <person name="Katayama S."/>
            <person name="Gough J."/>
            <person name="Frith M.C."/>
            <person name="Maeda N."/>
            <person name="Oyama R."/>
            <person name="Ravasi T."/>
            <person name="Lenhard B."/>
            <person name="Wells C."/>
            <person name="Kodzius R."/>
            <person name="Shimokawa K."/>
            <person name="Bajic V.B."/>
            <person name="Brenner S.E."/>
            <person name="Batalov S."/>
            <person name="Forrest A.R."/>
            <person name="Zavolan M."/>
            <person name="Davis M.J."/>
            <person name="Wilming L.G."/>
            <person name="Aidinis V."/>
            <person name="Allen J.E."/>
            <person name="Ambesi-Impiombato A."/>
            <person name="Apweiler R."/>
            <person name="Aturaliya R.N."/>
            <person name="Bailey T.L."/>
            <person name="Bansal M."/>
            <person name="Baxter L."/>
            <person name="Beisel K.W."/>
            <person name="Bersano T."/>
            <person name="Bono H."/>
            <person name="Chalk A.M."/>
            <person name="Chiu K.P."/>
            <person name="Choudhary V."/>
            <person name="Christoffels A."/>
            <person name="Clutterbuck D.R."/>
            <person name="Crowe M.L."/>
            <person name="Dalla E."/>
            <person name="Dalrymple B.P."/>
            <person name="de Bono B."/>
            <person name="Della Gatta G."/>
            <person name="di Bernardo D."/>
            <person name="Down T."/>
            <person name="Engstrom P."/>
            <person name="Fagiolini M."/>
            <person name="Faulkner G."/>
            <person name="Fletcher C.F."/>
            <person name="Fukushima T."/>
            <person name="Furuno M."/>
            <person name="Futaki S."/>
            <person name="Gariboldi M."/>
            <person name="Georgii-Hemming P."/>
            <person name="Gingeras T.R."/>
            <person name="Gojobori T."/>
            <person name="Green R.E."/>
            <person name="Gustincich S."/>
            <person name="Harbers M."/>
            <person name="Hayashi Y."/>
            <person name="Hensch T.K."/>
            <person name="Hirokawa N."/>
            <person name="Hill D."/>
            <person name="Huminiecki L."/>
            <person name="Iacono M."/>
            <person name="Ikeo K."/>
            <person name="Iwama A."/>
            <person name="Ishikawa T."/>
            <person name="Jakt M."/>
            <person name="Kanapin A."/>
            <person name="Katoh M."/>
            <person name="Kawasawa Y."/>
            <person name="Kelso J."/>
            <person name="Kitamura H."/>
            <person name="Kitano H."/>
            <person name="Kollias G."/>
            <person name="Krishnan S.P."/>
            <person name="Kruger A."/>
            <person name="Kummerfeld S.K."/>
            <person name="Kurochkin I.V."/>
            <person name="Lareau L.F."/>
            <person name="Lazarevic D."/>
            <person name="Lipovich L."/>
            <person name="Liu J."/>
            <person name="Liuni S."/>
            <person name="McWilliam S."/>
            <person name="Madan Babu M."/>
            <person name="Madera M."/>
            <person name="Marchionni L."/>
            <person name="Matsuda H."/>
            <person name="Matsuzawa S."/>
            <person name="Miki H."/>
            <person name="Mignone F."/>
            <person name="Miyake S."/>
            <person name="Morris K."/>
            <person name="Mottagui-Tabar S."/>
            <person name="Mulder N."/>
            <person name="Nakano N."/>
            <person name="Nakauchi H."/>
            <person name="Ng P."/>
            <person name="Nilsson R."/>
            <person name="Nishiguchi S."/>
            <person name="Nishikawa S."/>
            <person name="Nori F."/>
            <person name="Ohara O."/>
            <person name="Okazaki Y."/>
            <person name="Orlando V."/>
            <person name="Pang K.C."/>
            <person name="Pavan W.J."/>
            <person name="Pavesi G."/>
            <person name="Pesole G."/>
            <person name="Petrovsky N."/>
            <person name="Piazza S."/>
            <person name="Reed J."/>
            <person name="Reid J.F."/>
            <person name="Ring B.Z."/>
            <person name="Ringwald M."/>
            <person name="Rost B."/>
            <person name="Ruan Y."/>
            <person name="Salzberg S.L."/>
            <person name="Sandelin A."/>
            <person name="Schneider C."/>
            <person name="Schoenbach C."/>
            <person name="Sekiguchi K."/>
            <person name="Semple C.A."/>
            <person name="Seno S."/>
            <person name="Sessa L."/>
            <person name="Sheng Y."/>
            <person name="Shibata Y."/>
            <person name="Shimada H."/>
            <person name="Shimada K."/>
            <person name="Silva D."/>
            <person name="Sinclair B."/>
            <person name="Sperling S."/>
            <person name="Stupka E."/>
            <person name="Sugiura K."/>
            <person name="Sultana R."/>
            <person name="Takenaka Y."/>
            <person name="Taki K."/>
            <person name="Tammoja K."/>
            <person name="Tan S.L."/>
            <person name="Tang S."/>
            <person name="Taylor M.S."/>
            <person name="Tegner J."/>
            <person name="Teichmann S.A."/>
            <person name="Ueda H.R."/>
            <person name="van Nimwegen E."/>
            <person name="Verardo R."/>
            <person name="Wei C.L."/>
            <person name="Yagi K."/>
            <person name="Yamanishi H."/>
            <person name="Zabarovsky E."/>
            <person name="Zhu S."/>
            <person name="Zimmer A."/>
            <person name="Hide W."/>
            <person name="Bult C."/>
            <person name="Grimmond S.M."/>
            <person name="Teasdale R.D."/>
            <person name="Liu E.T."/>
            <person name="Brusic V."/>
            <person name="Quackenbush J."/>
            <person name="Wahlestedt C."/>
            <person name="Mattick J.S."/>
            <person name="Hume D.A."/>
            <person name="Kai C."/>
            <person name="Sasaki D."/>
            <person name="Tomaru Y."/>
            <person name="Fukuda S."/>
            <person name="Kanamori-Katayama M."/>
            <person name="Suzuki M."/>
            <person name="Aoki J."/>
            <person name="Arakawa T."/>
            <person name="Iida J."/>
            <person name="Imamura K."/>
            <person name="Itoh M."/>
            <person name="Kato T."/>
            <person name="Kawaji H."/>
            <person name="Kawagashira N."/>
            <person name="Kawashima T."/>
            <person name="Kojima M."/>
            <person name="Kondo S."/>
            <person name="Konno H."/>
            <person name="Nakano K."/>
            <person name="Ninomiya N."/>
            <person name="Nishio T."/>
            <person name="Okada M."/>
            <person name="Plessy C."/>
            <person name="Shibata K."/>
            <person name="Shiraki T."/>
            <person name="Suzuki S."/>
            <person name="Tagami M."/>
            <person name="Waki K."/>
            <person name="Watahiki A."/>
            <person name="Okamura-Oho Y."/>
            <person name="Suzuki H."/>
            <person name="Kawai J."/>
            <person name="Hayashizaki Y."/>
        </authorList>
    </citation>
    <scope>NUCLEOTIDE SEQUENCE [LARGE SCALE MRNA]</scope>
    <source>
        <strain>C57BL/6J</strain>
        <tissue>Embryo</tissue>
    </source>
</reference>
<reference key="3">
    <citation type="journal article" date="2009" name="PLoS Biol.">
        <title>Lineage-specific biology revealed by a finished genome assembly of the mouse.</title>
        <authorList>
            <person name="Church D.M."/>
            <person name="Goodstadt L."/>
            <person name="Hillier L.W."/>
            <person name="Zody M.C."/>
            <person name="Goldstein S."/>
            <person name="She X."/>
            <person name="Bult C.J."/>
            <person name="Agarwala R."/>
            <person name="Cherry J.L."/>
            <person name="DiCuccio M."/>
            <person name="Hlavina W."/>
            <person name="Kapustin Y."/>
            <person name="Meric P."/>
            <person name="Maglott D."/>
            <person name="Birtle Z."/>
            <person name="Marques A.C."/>
            <person name="Graves T."/>
            <person name="Zhou S."/>
            <person name="Teague B."/>
            <person name="Potamousis K."/>
            <person name="Churas C."/>
            <person name="Place M."/>
            <person name="Herschleb J."/>
            <person name="Runnheim R."/>
            <person name="Forrest D."/>
            <person name="Amos-Landgraf J."/>
            <person name="Schwartz D.C."/>
            <person name="Cheng Z."/>
            <person name="Lindblad-Toh K."/>
            <person name="Eichler E.E."/>
            <person name="Ponting C.P."/>
        </authorList>
    </citation>
    <scope>NUCLEOTIDE SEQUENCE [LARGE SCALE GENOMIC DNA]</scope>
    <source>
        <strain>C57BL/6J</strain>
    </source>
</reference>
<reference key="4">
    <citation type="journal article" date="2004" name="Genome Res.">
        <title>The status, quality, and expansion of the NIH full-length cDNA project: the Mammalian Gene Collection (MGC).</title>
        <authorList>
            <consortium name="The MGC Project Team"/>
        </authorList>
    </citation>
    <scope>NUCLEOTIDE SEQUENCE [LARGE SCALE MRNA]</scope>
    <source>
        <strain>C57BL/6J</strain>
        <strain>FVB/N</strain>
        <tissue>Brain</tissue>
        <tissue>Colon</tissue>
    </source>
</reference>
<reference key="5">
    <citation type="submission" date="2001-09" db="EMBL/GenBank/DDBJ databases">
        <title>mouse speckled type poz.</title>
        <authorList>
            <person name="Takahashi I."/>
            <person name="Hashimoto K."/>
        </authorList>
    </citation>
    <scope>NUCLEOTIDE SEQUENCE [MRNA] OF 2-374</scope>
</reference>
<reference key="6">
    <citation type="journal article" date="2002" name="Biochim. Biophys. Acta">
        <title>MacroH2A1.2 binds the nuclear protein Spop.</title>
        <authorList>
            <person name="Takahashi I."/>
            <person name="Kameoka Y."/>
            <person name="Hashimoto K."/>
        </authorList>
    </citation>
    <scope>INTERACTION WITH MACROH2A1</scope>
</reference>
<reference key="7">
    <citation type="journal article" date="2006" name="Dev. Cell">
        <title>A hedgehog-induced BTB protein modulates hedgehog signaling by degrading Ci/Gli transcription factor.</title>
        <authorList>
            <person name="Zhang Q."/>
            <person name="Zhang L."/>
            <person name="Wang B."/>
            <person name="Ou C.-Y."/>
            <person name="Chien C.-T."/>
            <person name="Jiang J."/>
        </authorList>
    </citation>
    <scope>IDENTIFICATION</scope>
    <scope>FUNCTION</scope>
</reference>
<reference key="8">
    <citation type="journal article" date="2010" name="Development">
        <title>Suppressor of fused and Spop regulate the stability, processing and function of Gli2 and Gli3 full-length activators but not their repressors.</title>
        <authorList>
            <person name="Wang C."/>
            <person name="Pan Y."/>
            <person name="Wang B."/>
        </authorList>
    </citation>
    <scope>FUNCTION</scope>
    <scope>INTERACTION WITH GLI2 AND GLI3</scope>
</reference>
<reference key="9">
    <citation type="journal article" date="2010" name="J. Clin. Invest.">
        <title>Pcif1 modulates Pdx1 protein stability and pancreatic beta cell function and survival in mice.</title>
        <authorList>
            <person name="Claiborn K.C."/>
            <person name="Sachdeva M.M."/>
            <person name="Cannon C.E."/>
            <person name="Groff D.N."/>
            <person name="Singer J.D."/>
            <person name="Stoffers D.A."/>
        </authorList>
    </citation>
    <scope>FUNCTION</scope>
</reference>
<reference key="10">
    <citation type="journal article" date="2020" name="Cell Rep.">
        <title>PHF7 Modulates BRDT Stability and Histone-to-Protamine Exchange during Spermiogenesis.</title>
        <authorList>
            <person name="Kim C.R."/>
            <person name="Noda T."/>
            <person name="Kim H."/>
            <person name="Kim G."/>
            <person name="Park S."/>
            <person name="Na Y."/>
            <person name="Oura S."/>
            <person name="Shimada K."/>
            <person name="Bang I."/>
            <person name="Ahn J.Y."/>
            <person name="Kim Y.R."/>
            <person name="Oh S.K."/>
            <person name="Choi H.J."/>
            <person name="Kim J.S."/>
            <person name="Jung I."/>
            <person name="Lee H."/>
            <person name="Okada Y."/>
            <person name="Ikawa M."/>
            <person name="Baek S.H."/>
        </authorList>
    </citation>
    <scope>FUNCTION</scope>
</reference>
<protein>
    <recommendedName>
        <fullName evidence="11">Speckle-type POZ protein</fullName>
    </recommendedName>
    <alternativeName>
        <fullName>HIB homolog 1</fullName>
    </alternativeName>
    <alternativeName>
        <fullName>PDX-1 C-terminal-interacting factor 1</fullName>
    </alternativeName>
</protein>
<keyword id="KW-0225">Disease variant</keyword>
<keyword id="KW-0539">Nucleus</keyword>
<keyword id="KW-1185">Reference proteome</keyword>
<keyword id="KW-0833">Ubl conjugation pathway</keyword>
<gene>
    <name evidence="12" type="primary">Spop</name>
    <name type="synonym">Pcif1</name>
</gene>
<proteinExistence type="evidence at protein level"/>
<evidence type="ECO:0000250" key="1"/>
<evidence type="ECO:0000250" key="2">
    <source>
        <dbReference type="UniProtKB" id="O43791"/>
    </source>
</evidence>
<evidence type="ECO:0000255" key="3">
    <source>
        <dbReference type="PROSITE-ProRule" id="PRU00037"/>
    </source>
</evidence>
<evidence type="ECO:0000255" key="4">
    <source>
        <dbReference type="PROSITE-ProRule" id="PRU00129"/>
    </source>
</evidence>
<evidence type="ECO:0000269" key="5">
    <source>
    </source>
</evidence>
<evidence type="ECO:0000269" key="6">
    <source>
    </source>
</evidence>
<evidence type="ECO:0000269" key="7">
    <source>
    </source>
</evidence>
<evidence type="ECO:0000269" key="8">
    <source>
    </source>
</evidence>
<evidence type="ECO:0000269" key="9">
    <source>
    </source>
</evidence>
<evidence type="ECO:0000269" key="10">
    <source>
    </source>
</evidence>
<evidence type="ECO:0000305" key="11"/>
<evidence type="ECO:0000312" key="12">
    <source>
        <dbReference type="EMBL" id="AAT08952.1"/>
    </source>
</evidence>
<organism>
    <name type="scientific">Mus musculus</name>
    <name type="common">Mouse</name>
    <dbReference type="NCBI Taxonomy" id="10090"/>
    <lineage>
        <taxon>Eukaryota</taxon>
        <taxon>Metazoa</taxon>
        <taxon>Chordata</taxon>
        <taxon>Craniata</taxon>
        <taxon>Vertebrata</taxon>
        <taxon>Euteleostomi</taxon>
        <taxon>Mammalia</taxon>
        <taxon>Eutheria</taxon>
        <taxon>Euarchontoglires</taxon>
        <taxon>Glires</taxon>
        <taxon>Rodentia</taxon>
        <taxon>Myomorpha</taxon>
        <taxon>Muroidea</taxon>
        <taxon>Muridae</taxon>
        <taxon>Murinae</taxon>
        <taxon>Mus</taxon>
        <taxon>Mus</taxon>
    </lineage>
</organism>
<name>SPOP_MOUSE</name>
<sequence>MSRVPSPPPPAEMSSGPVAESWCYTQIKVVKFSYMWTINNFSFCREEMGEVIKSSTFSSGANDKLKWCLRVNPKGLDEESKDYLSLYLLLVSCPKSEVRAKFKFSILNAKGEETKAMESQRAYRFVQGKDWGFKKFIRRDFLLDEANGLLPDDKLTLFCEVSVVQDSVNISGQNTMNMVKVPECRLADELGGLWENSRFTDCCLCVAGQEFQAHKAILAARSPVFSAMFEHEMEESKKNRVEINDVEPEVFKEMMCFIYTGKAPNLDKMADDLLAAADKYALERLKVMCEDALCSNLSVENAAEILILADLHSADQLKTQAVDFINYHASDVLETSGWKSMVVSHPHLVAEAYRSLASAQCPFLGPPRKRLKQS</sequence>
<feature type="chain" id="PRO_0000191622" description="Speckle-type POZ protein">
    <location>
        <begin position="1"/>
        <end position="374"/>
    </location>
</feature>
<feature type="domain" description="MATH" evidence="4">
    <location>
        <begin position="31"/>
        <end position="161"/>
    </location>
</feature>
<feature type="domain" description="BTB" evidence="3">
    <location>
        <begin position="200"/>
        <end position="267"/>
    </location>
</feature>
<feature type="region of interest" description="Required for nuclear localization" evidence="1">
    <location>
        <begin position="71"/>
        <end position="191"/>
    </location>
</feature>
<feature type="region of interest" description="Important for binding substrate proteins" evidence="1">
    <location>
        <begin position="123"/>
        <end position="133"/>
    </location>
</feature>
<feature type="region of interest" description="Important for homodimerization" evidence="1">
    <location>
        <begin position="186"/>
        <end position="217"/>
    </location>
</feature>
<feature type="region of interest" description="Important for homodimerization" evidence="1">
    <location>
        <begin position="297"/>
        <end position="355"/>
    </location>
</feature>
<feature type="sequence conflict" description="In Ref. 2; BAE38870." evidence="11" ref="2">
    <original>S</original>
    <variation>G</variation>
    <location>
        <position position="54"/>
    </location>
</feature>
<dbReference type="EMBL" id="AY538613">
    <property type="protein sequence ID" value="AAT08952.1"/>
    <property type="molecule type" value="mRNA"/>
</dbReference>
<dbReference type="EMBL" id="AK028201">
    <property type="protein sequence ID" value="BAC25809.1"/>
    <property type="molecule type" value="mRNA"/>
</dbReference>
<dbReference type="EMBL" id="AK030746">
    <property type="protein sequence ID" value="BAC27114.1"/>
    <property type="molecule type" value="mRNA"/>
</dbReference>
<dbReference type="EMBL" id="AK159482">
    <property type="protein sequence ID" value="BAE35119.1"/>
    <property type="molecule type" value="mRNA"/>
</dbReference>
<dbReference type="EMBL" id="AK166581">
    <property type="protein sequence ID" value="BAE38870.1"/>
    <property type="molecule type" value="mRNA"/>
</dbReference>
<dbReference type="EMBL" id="AL662875">
    <property type="status" value="NOT_ANNOTATED_CDS"/>
    <property type="molecule type" value="Genomic_DNA"/>
</dbReference>
<dbReference type="EMBL" id="BC043131">
    <property type="protein sequence ID" value="AAH43131.1"/>
    <property type="molecule type" value="mRNA"/>
</dbReference>
<dbReference type="EMBL" id="BC045205">
    <property type="protein sequence ID" value="AAH45205.1"/>
    <property type="molecule type" value="mRNA"/>
</dbReference>
<dbReference type="EMBL" id="AB071989">
    <property type="protein sequence ID" value="BAB68542.1"/>
    <property type="molecule type" value="mRNA"/>
</dbReference>
<dbReference type="CCDS" id="CCDS36286.1"/>
<dbReference type="RefSeq" id="NP_001346036.1">
    <property type="nucleotide sequence ID" value="NM_001359107.1"/>
</dbReference>
<dbReference type="RefSeq" id="NP_079563.2">
    <property type="nucleotide sequence ID" value="NM_025287.2"/>
</dbReference>
<dbReference type="RefSeq" id="XP_006532755.1">
    <property type="nucleotide sequence ID" value="XM_006532692.2"/>
</dbReference>
<dbReference type="SMR" id="Q6ZWS8"/>
<dbReference type="BioGRID" id="203465">
    <property type="interactions" value="315"/>
</dbReference>
<dbReference type="CORUM" id="Q6ZWS8"/>
<dbReference type="DIP" id="DIP-43930N"/>
<dbReference type="FunCoup" id="Q6ZWS8">
    <property type="interactions" value="2417"/>
</dbReference>
<dbReference type="IntAct" id="Q6ZWS8">
    <property type="interactions" value="4"/>
</dbReference>
<dbReference type="MINT" id="Q6ZWS8"/>
<dbReference type="STRING" id="10090.ENSMUSP00000103350"/>
<dbReference type="iPTMnet" id="Q6ZWS8"/>
<dbReference type="PhosphoSitePlus" id="Q6ZWS8"/>
<dbReference type="PaxDb" id="10090-ENSMUSP00000103350"/>
<dbReference type="ProteomicsDB" id="261624"/>
<dbReference type="DNASU" id="20747"/>
<dbReference type="Ensembl" id="ENSMUST00000107722.8">
    <property type="protein sequence ID" value="ENSMUSP00000103350.2"/>
    <property type="gene ID" value="ENSMUSG00000057522.16"/>
</dbReference>
<dbReference type="Ensembl" id="ENSMUST00000107724.9">
    <property type="protein sequence ID" value="ENSMUSP00000103352.3"/>
    <property type="gene ID" value="ENSMUSG00000057522.16"/>
</dbReference>
<dbReference type="GeneID" id="20747"/>
<dbReference type="KEGG" id="mmu:20747"/>
<dbReference type="UCSC" id="uc007laj.1">
    <property type="organism name" value="mouse"/>
</dbReference>
<dbReference type="AGR" id="MGI:1343085"/>
<dbReference type="CTD" id="8405"/>
<dbReference type="MGI" id="MGI:1343085">
    <property type="gene designation" value="Spop"/>
</dbReference>
<dbReference type="VEuPathDB" id="HostDB:ENSMUSG00000057522"/>
<dbReference type="eggNOG" id="KOG1987">
    <property type="taxonomic scope" value="Eukaryota"/>
</dbReference>
<dbReference type="GeneTree" id="ENSGT00940000154376"/>
<dbReference type="HOGENOM" id="CLU_004253_2_0_1"/>
<dbReference type="InParanoid" id="Q6ZWS8"/>
<dbReference type="OMA" id="IKFNYMW"/>
<dbReference type="OrthoDB" id="6359816at2759"/>
<dbReference type="PhylomeDB" id="Q6ZWS8"/>
<dbReference type="TreeFam" id="TF313419"/>
<dbReference type="Reactome" id="R-MMU-5632684">
    <property type="pathway name" value="Hedgehog 'on' state"/>
</dbReference>
<dbReference type="UniPathway" id="UPA00143"/>
<dbReference type="BioGRID-ORCS" id="20747">
    <property type="hits" value="8 hits in 80 CRISPR screens"/>
</dbReference>
<dbReference type="CD-CODE" id="3F0300C2">
    <property type="entry name" value="Nuclear speckle"/>
</dbReference>
<dbReference type="ChiTaRS" id="Spop">
    <property type="organism name" value="mouse"/>
</dbReference>
<dbReference type="PRO" id="PR:Q6ZWS8"/>
<dbReference type="Proteomes" id="UP000000589">
    <property type="component" value="Chromosome 11"/>
</dbReference>
<dbReference type="RNAct" id="Q6ZWS8">
    <property type="molecule type" value="protein"/>
</dbReference>
<dbReference type="Bgee" id="ENSMUSG00000057522">
    <property type="expression patterns" value="Expressed in temporalis muscle and 259 other cell types or tissues"/>
</dbReference>
<dbReference type="ExpressionAtlas" id="Q6ZWS8">
    <property type="expression patterns" value="baseline and differential"/>
</dbReference>
<dbReference type="GO" id="GO:0031463">
    <property type="term" value="C:Cul3-RING ubiquitin ligase complex"/>
    <property type="evidence" value="ECO:0000250"/>
    <property type="project" value="UniProtKB"/>
</dbReference>
<dbReference type="GO" id="GO:0016607">
    <property type="term" value="C:nuclear speck"/>
    <property type="evidence" value="ECO:0000314"/>
    <property type="project" value="MGI"/>
</dbReference>
<dbReference type="GO" id="GO:0005634">
    <property type="term" value="C:nucleus"/>
    <property type="evidence" value="ECO:0000250"/>
    <property type="project" value="UniProtKB"/>
</dbReference>
<dbReference type="GO" id="GO:0061629">
    <property type="term" value="F:RNA polymerase II-specific DNA-binding transcription factor binding"/>
    <property type="evidence" value="ECO:0000353"/>
    <property type="project" value="MGI"/>
</dbReference>
<dbReference type="GO" id="GO:0042593">
    <property type="term" value="P:glucose homeostasis"/>
    <property type="evidence" value="ECO:0000316"/>
    <property type="project" value="MGI"/>
</dbReference>
<dbReference type="GO" id="GO:0070059">
    <property type="term" value="P:intrinsic apoptotic signaling pathway in response to endoplasmic reticulum stress"/>
    <property type="evidence" value="ECO:0000316"/>
    <property type="project" value="MGI"/>
</dbReference>
<dbReference type="GO" id="GO:0000122">
    <property type="term" value="P:negative regulation of transcription by RNA polymerase II"/>
    <property type="evidence" value="ECO:0000314"/>
    <property type="project" value="MGI"/>
</dbReference>
<dbReference type="GO" id="GO:1902237">
    <property type="term" value="P:positive regulation of endoplasmic reticulum stress-induced intrinsic apoptotic signaling pathway"/>
    <property type="evidence" value="ECO:0000316"/>
    <property type="project" value="MGI"/>
</dbReference>
<dbReference type="GO" id="GO:2000676">
    <property type="term" value="P:positive regulation of type B pancreatic cell apoptotic process"/>
    <property type="evidence" value="ECO:0000316"/>
    <property type="project" value="MGI"/>
</dbReference>
<dbReference type="GO" id="GO:0043161">
    <property type="term" value="P:proteasome-mediated ubiquitin-dependent protein catabolic process"/>
    <property type="evidence" value="ECO:0000316"/>
    <property type="project" value="MGI"/>
</dbReference>
<dbReference type="GO" id="GO:0016567">
    <property type="term" value="P:protein ubiquitination"/>
    <property type="evidence" value="ECO:0007669"/>
    <property type="project" value="UniProtKB-UniPathway"/>
</dbReference>
<dbReference type="GO" id="GO:0097050">
    <property type="term" value="P:type B pancreatic cell apoptotic process"/>
    <property type="evidence" value="ECO:0000316"/>
    <property type="project" value="MGI"/>
</dbReference>
<dbReference type="GO" id="GO:0006511">
    <property type="term" value="P:ubiquitin-dependent protein catabolic process"/>
    <property type="evidence" value="ECO:0000314"/>
    <property type="project" value="MGI"/>
</dbReference>
<dbReference type="CDD" id="cd18518">
    <property type="entry name" value="BACK_SPOP"/>
    <property type="match status" value="1"/>
</dbReference>
<dbReference type="CDD" id="cd18279">
    <property type="entry name" value="BTB_POZ_SPOP-like"/>
    <property type="match status" value="1"/>
</dbReference>
<dbReference type="CDD" id="cd03774">
    <property type="entry name" value="MATH_SPOP"/>
    <property type="match status" value="1"/>
</dbReference>
<dbReference type="FunFam" id="2.60.210.10:FF:000028">
    <property type="entry name" value="Speckle-type POZ protein-like"/>
    <property type="match status" value="1"/>
</dbReference>
<dbReference type="FunFam" id="3.30.710.10:FF:000008">
    <property type="entry name" value="Speckle-type POZ protein-like a"/>
    <property type="match status" value="1"/>
</dbReference>
<dbReference type="Gene3D" id="6.10.250.3030">
    <property type="match status" value="1"/>
</dbReference>
<dbReference type="Gene3D" id="6.20.250.50">
    <property type="match status" value="1"/>
</dbReference>
<dbReference type="Gene3D" id="2.60.210.10">
    <property type="entry name" value="Apoptosis, Tumor Necrosis Factor Receptor Associated Protein 2, Chain A"/>
    <property type="match status" value="1"/>
</dbReference>
<dbReference type="Gene3D" id="3.30.710.10">
    <property type="entry name" value="Potassium Channel Kv1.1, Chain A"/>
    <property type="match status" value="1"/>
</dbReference>
<dbReference type="InterPro" id="IPR056423">
    <property type="entry name" value="BACK_BPM_SPOP"/>
</dbReference>
<dbReference type="InterPro" id="IPR000210">
    <property type="entry name" value="BTB/POZ_dom"/>
</dbReference>
<dbReference type="InterPro" id="IPR002083">
    <property type="entry name" value="MATH/TRAF_dom"/>
</dbReference>
<dbReference type="InterPro" id="IPR011333">
    <property type="entry name" value="SKP1/BTB/POZ_sf"/>
</dbReference>
<dbReference type="InterPro" id="IPR034089">
    <property type="entry name" value="SPOP_C"/>
</dbReference>
<dbReference type="InterPro" id="IPR008974">
    <property type="entry name" value="TRAF-like"/>
</dbReference>
<dbReference type="PANTHER" id="PTHR24413">
    <property type="entry name" value="SPECKLE-TYPE POZ PROTEIN"/>
    <property type="match status" value="1"/>
</dbReference>
<dbReference type="Pfam" id="PF24570">
    <property type="entry name" value="BACK_BPM_SPOP"/>
    <property type="match status" value="1"/>
</dbReference>
<dbReference type="Pfam" id="PF00651">
    <property type="entry name" value="BTB"/>
    <property type="match status" value="1"/>
</dbReference>
<dbReference type="Pfam" id="PF22486">
    <property type="entry name" value="MATH_2"/>
    <property type="match status" value="1"/>
</dbReference>
<dbReference type="SMART" id="SM00225">
    <property type="entry name" value="BTB"/>
    <property type="match status" value="1"/>
</dbReference>
<dbReference type="SMART" id="SM00061">
    <property type="entry name" value="MATH"/>
    <property type="match status" value="1"/>
</dbReference>
<dbReference type="SUPFAM" id="SSF54695">
    <property type="entry name" value="POZ domain"/>
    <property type="match status" value="1"/>
</dbReference>
<dbReference type="SUPFAM" id="SSF49599">
    <property type="entry name" value="TRAF domain-like"/>
    <property type="match status" value="1"/>
</dbReference>
<dbReference type="PROSITE" id="PS50097">
    <property type="entry name" value="BTB"/>
    <property type="match status" value="1"/>
</dbReference>
<dbReference type="PROSITE" id="PS50144">
    <property type="entry name" value="MATH"/>
    <property type="match status" value="1"/>
</dbReference>
<comment type="function">
    <text evidence="2 6 7 8 9 10">Component of a cullin-RING-based BCR (BTB-CUL3-RBX1) E3 ubiquitin-protein ligase complex that mediates the ubiquitination of target proteins, leading most often to their proteasomal degradation. The cullin-RING-based BCR (BTB-CUL3-RBX1) E3 ubiquitin-protein ligase complex containing homodimeric SPOP has higher ubiquitin ligase activity than the complex that contains the heterodimer formed by SPOP and SPOPL (By similarity). In complex with CUL3, involved in ubiquitination and proteasomal degradation of BRMS1, DAXX, PDX1/IPF1, GLI2 and GLI3. In complex with CUL3, involved in ubiquitination of MACROH2A1 and BMI1; this does not lead to their proteasomal degradation. Inhibits transcriptional activation of PDX1/IPF1 targets, such as insulin, by promoting PDX1/IPF1 degradation. Involved in the regulation of bromodomain and extra-terminal motif (BET) proteins BRD2, BRD3, BRD4 stability (By similarity). Plays an essential role for proper translation, but not for their degradation, of critical DNA replication licensing factors CDT1 and CDC6, thereby participating in DNA synthesis and cell proliferation. Regulates interferon regulatory factor 1/IRF1 proteasomal turnover by targeting S/T-rich degrons in IRF1 (By similarity). Involved in ubiquitination of BRDT and promotes its degradation, thereby regulates histone removal in early condensing spermatids prior to histone-to-protamine exchange (PubMed:32726616).</text>
</comment>
<comment type="pathway">
    <text>Protein modification; protein ubiquitination.</text>
</comment>
<comment type="subunit">
    <text evidence="2 5 6 8">Homodimer and homooligomer. Heterodimer with SPOPL. Each dimer interacts with two CUL3 molecules. Part of cullin-RING-based BCR (BTB-CUL3-RBX1) E3 ubiquitin-protein ligase complexes that contain CUL3 and homodimeric SPOP, or the heterodimer formed by SPOP and SPOPL, plus a target protein, such as MACROH2A1, PDX1/IPF1, BMI1, BRMS1 and DAXX (By similarity). Interacts with MACROH2A1, PDX1/IPF1, GLI2 and GLI3. Interacts with IRF1; this interaction mediates IRF1 proteasomal degradation (By similarity). Interacts with HNF1A (By similarity).</text>
</comment>
<comment type="interaction">
    <interactant intactId="EBI-7128920">
        <id>Q6ZWS8</id>
    </interactant>
    <interactant intactId="EBI-9344284">
        <id>Q0VGT2</id>
        <label>Gli2</label>
    </interactant>
    <organismsDiffer>false</organismsDiffer>
    <experiments>2</experiments>
</comment>
<comment type="interaction">
    <interactant intactId="EBI-7128920">
        <id>Q6ZWS8</id>
    </interactant>
    <interactant intactId="EBI-7128945">
        <id>P52946</id>
        <label>Pdx1</label>
    </interactant>
    <organismsDiffer>false</organismsDiffer>
    <experiments>5</experiments>
</comment>
<comment type="interaction">
    <interactant intactId="EBI-7128920">
        <id>Q6ZWS8</id>
    </interactant>
    <interactant intactId="EBI-308055">
        <id>P10071</id>
        <label>GLI3</label>
    </interactant>
    <organismsDiffer>true</organismsDiffer>
    <experiments>2</experiments>
</comment>
<comment type="subcellular location">
    <subcellularLocation>
        <location evidence="6">Nucleus</location>
    </subcellularLocation>
    <subcellularLocation>
        <location evidence="6">Nucleus speckle</location>
    </subcellularLocation>
</comment>
<comment type="tissue specificity">
    <text>Widely expressed, mainly in pancreas and in particular in adult pancreatic insulin-producing beta cells and in a subset of exocrine acinar and duct cells.</text>
</comment>
<comment type="domain">
    <text evidence="2">The BTB (POZ) domain mediates dimerization and interaction with CUL3.</text>
</comment>
<comment type="domain">
    <text>The MATH domain mediates interaction with protein-ubiquitin ligase substrates, such as MACROH2A1 and BMI1.</text>
</comment>
<comment type="similarity">
    <text evidence="11">Belongs to the Tdpoz family.</text>
</comment>
<accession>Q6ZWS8</accession>
<accession>Q3TLC2</accession>
<accession>Q5ST07</accession>
<accession>Q76LV9</accession>